<organism>
    <name type="scientific">Triticum aestivum</name>
    <name type="common">Wheat</name>
    <dbReference type="NCBI Taxonomy" id="4565"/>
    <lineage>
        <taxon>Eukaryota</taxon>
        <taxon>Viridiplantae</taxon>
        <taxon>Streptophyta</taxon>
        <taxon>Embryophyta</taxon>
        <taxon>Tracheophyta</taxon>
        <taxon>Spermatophyta</taxon>
        <taxon>Magnoliopsida</taxon>
        <taxon>Liliopsida</taxon>
        <taxon>Poales</taxon>
        <taxon>Poaceae</taxon>
        <taxon>BOP clade</taxon>
        <taxon>Pooideae</taxon>
        <taxon>Triticodae</taxon>
        <taxon>Triticeae</taxon>
        <taxon>Triticinae</taxon>
        <taxon>Triticum</taxon>
    </lineage>
</organism>
<dbReference type="PIR" id="B25507">
    <property type="entry name" value="B25507"/>
</dbReference>
<dbReference type="MEROPS" id="I12.010"/>
<dbReference type="Proteomes" id="UP000019116">
    <property type="component" value="Unplaced"/>
</dbReference>
<dbReference type="ExpressionAtlas" id="P09864">
    <property type="expression patterns" value="baseline"/>
</dbReference>
<dbReference type="GO" id="GO:0005576">
    <property type="term" value="C:extracellular region"/>
    <property type="evidence" value="ECO:0007669"/>
    <property type="project" value="InterPro"/>
</dbReference>
<dbReference type="GO" id="GO:0004867">
    <property type="term" value="F:serine-type endopeptidase inhibitor activity"/>
    <property type="evidence" value="ECO:0007669"/>
    <property type="project" value="UniProtKB-KW"/>
</dbReference>
<dbReference type="CDD" id="cd00023">
    <property type="entry name" value="BBI"/>
    <property type="match status" value="1"/>
</dbReference>
<dbReference type="Gene3D" id="2.10.69.10">
    <property type="entry name" value="Cysteine Protease (Bromelain) Inhibitor, subunit H"/>
    <property type="match status" value="1"/>
</dbReference>
<dbReference type="InterPro" id="IPR035995">
    <property type="entry name" value="Bowman-Birk_prot_inh"/>
</dbReference>
<dbReference type="InterPro" id="IPR000877">
    <property type="entry name" value="Prot_inh_BBI"/>
</dbReference>
<dbReference type="PANTHER" id="PTHR33479">
    <property type="entry name" value="BOWMAN-BIRK TYPE BRAN TRYPSIN INHIBITOR"/>
    <property type="match status" value="1"/>
</dbReference>
<dbReference type="PANTHER" id="PTHR33479:SF22">
    <property type="entry name" value="BOWMAN-BIRK TYPE BRAN TRYPSIN INHIBITOR"/>
    <property type="match status" value="1"/>
</dbReference>
<dbReference type="Pfam" id="PF00228">
    <property type="entry name" value="Bowman-Birk_leg"/>
    <property type="match status" value="1"/>
</dbReference>
<dbReference type="SMART" id="SM00269">
    <property type="entry name" value="BowB"/>
    <property type="match status" value="1"/>
</dbReference>
<dbReference type="SUPFAM" id="SSF57247">
    <property type="entry name" value="Bowman-Birk inhibitor, BBI"/>
    <property type="match status" value="1"/>
</dbReference>
<dbReference type="PROSITE" id="PS00281">
    <property type="entry name" value="BOWMAN_BIRK"/>
    <property type="match status" value="1"/>
</dbReference>
<accession>P09864</accession>
<name>IBB2_WHEAT</name>
<sequence length="53" mass="5953">ATRPWKCCDRAICTKSFPPMCRCMDMVEQCAATCKKCGPATSDSSRRVCEDXY</sequence>
<proteinExistence type="evidence at protein level"/>
<protein>
    <recommendedName>
        <fullName>Bowman-Birk type proteinase inhibitor II-4</fullName>
    </recommendedName>
</protein>
<evidence type="ECO:0000250" key="1"/>
<evidence type="ECO:0000250" key="2">
    <source>
        <dbReference type="UniProtKB" id="P80321"/>
    </source>
</evidence>
<evidence type="ECO:0000305" key="3"/>
<keyword id="KW-0903">Direct protein sequencing</keyword>
<keyword id="KW-1015">Disulfide bond</keyword>
<keyword id="KW-0646">Protease inhibitor</keyword>
<keyword id="KW-1185">Reference proteome</keyword>
<keyword id="KW-0722">Serine protease inhibitor</keyword>
<reference key="1">
    <citation type="journal article" date="1986" name="J. Biochem.">
        <title>Wheat germ trypsin inhibitors. Isolation and structural characterization of single-headed and double-headed inhibitors of the Bowman-Birk type.</title>
        <authorList>
            <person name="Odani S."/>
            <person name="Koide T."/>
            <person name="Ono T."/>
        </authorList>
    </citation>
    <scope>PROTEIN SEQUENCE</scope>
</reference>
<feature type="chain" id="PRO_0000105859" description="Bowman-Birk type proteinase inhibitor II-4">
    <location>
        <begin position="1" status="less than"/>
        <end position="53" status="greater than"/>
    </location>
</feature>
<feature type="site" description="Reactive bond" evidence="1">
    <location>
        <begin position="15"/>
        <end position="16"/>
    </location>
</feature>
<feature type="site" description="Reactive bond" evidence="1">
    <location>
        <begin position="41"/>
        <end position="42"/>
    </location>
</feature>
<feature type="disulfide bond" evidence="2">
    <location>
        <begin position="8"/>
        <end position="23"/>
    </location>
</feature>
<feature type="disulfide bond" evidence="2">
    <location>
        <begin position="13"/>
        <end position="21"/>
    </location>
</feature>
<feature type="disulfide bond" evidence="2">
    <location>
        <begin position="30"/>
        <end position="37"/>
    </location>
</feature>
<feature type="disulfide bond" evidence="2">
    <location>
        <begin position="34"/>
        <end position="49"/>
    </location>
</feature>
<feature type="non-terminal residue">
    <location>
        <position position="1"/>
    </location>
</feature>
<feature type="non-terminal residue">
    <location>
        <position position="53"/>
    </location>
</feature>
<comment type="similarity">
    <text evidence="3">Belongs to the Bowman-Birk serine protease inhibitor family.</text>
</comment>